<name>TRPC_LACLM</name>
<reference key="1">
    <citation type="journal article" date="2007" name="J. Bacteriol.">
        <title>The complete genome sequence of the lactic acid bacterial paradigm Lactococcus lactis subsp. cremoris MG1363.</title>
        <authorList>
            <person name="Wegmann U."/>
            <person name="O'Connell-Motherway M."/>
            <person name="Zomer A."/>
            <person name="Buist G."/>
            <person name="Shearman C."/>
            <person name="Canchaya C."/>
            <person name="Ventura M."/>
            <person name="Goesmann A."/>
            <person name="Gasson M.J."/>
            <person name="Kuipers O.P."/>
            <person name="van Sinderen D."/>
            <person name="Kok J."/>
        </authorList>
    </citation>
    <scope>NUCLEOTIDE SEQUENCE [LARGE SCALE GENOMIC DNA]</scope>
    <source>
        <strain>MG1363</strain>
    </source>
</reference>
<feature type="chain" id="PRO_1000018488" description="Indole-3-glycerol phosphate synthase">
    <location>
        <begin position="1"/>
        <end position="264"/>
    </location>
</feature>
<gene>
    <name evidence="1" type="primary">trpC</name>
    <name type="ordered locus">llmg_1038</name>
</gene>
<organism>
    <name type="scientific">Lactococcus lactis subsp. cremoris (strain MG1363)</name>
    <dbReference type="NCBI Taxonomy" id="416870"/>
    <lineage>
        <taxon>Bacteria</taxon>
        <taxon>Bacillati</taxon>
        <taxon>Bacillota</taxon>
        <taxon>Bacilli</taxon>
        <taxon>Lactobacillales</taxon>
        <taxon>Streptococcaceae</taxon>
        <taxon>Lactococcus</taxon>
        <taxon>Lactococcus cremoris subsp. cremoris</taxon>
    </lineage>
</organism>
<keyword id="KW-0028">Amino-acid biosynthesis</keyword>
<keyword id="KW-0057">Aromatic amino acid biosynthesis</keyword>
<keyword id="KW-0210">Decarboxylase</keyword>
<keyword id="KW-0456">Lyase</keyword>
<keyword id="KW-0822">Tryptophan biosynthesis</keyword>
<protein>
    <recommendedName>
        <fullName evidence="1">Indole-3-glycerol phosphate synthase</fullName>
        <shortName evidence="1">IGPS</shortName>
        <ecNumber evidence="1">4.1.1.48</ecNumber>
    </recommendedName>
</protein>
<dbReference type="EC" id="4.1.1.48" evidence="1"/>
<dbReference type="EMBL" id="AM406671">
    <property type="protein sequence ID" value="CAL97630.1"/>
    <property type="molecule type" value="Genomic_DNA"/>
</dbReference>
<dbReference type="RefSeq" id="WP_011676418.1">
    <property type="nucleotide sequence ID" value="NC_009004.1"/>
</dbReference>
<dbReference type="SMR" id="A2RK21"/>
<dbReference type="STRING" id="416870.llmg_1038"/>
<dbReference type="KEGG" id="llm:llmg_1038"/>
<dbReference type="eggNOG" id="COG0134">
    <property type="taxonomic scope" value="Bacteria"/>
</dbReference>
<dbReference type="HOGENOM" id="CLU_034247_2_1_9"/>
<dbReference type="OrthoDB" id="9804217at2"/>
<dbReference type="PhylomeDB" id="A2RK21"/>
<dbReference type="UniPathway" id="UPA00035">
    <property type="reaction ID" value="UER00043"/>
</dbReference>
<dbReference type="Proteomes" id="UP000000364">
    <property type="component" value="Chromosome"/>
</dbReference>
<dbReference type="GO" id="GO:0004425">
    <property type="term" value="F:indole-3-glycerol-phosphate synthase activity"/>
    <property type="evidence" value="ECO:0007669"/>
    <property type="project" value="UniProtKB-UniRule"/>
</dbReference>
<dbReference type="GO" id="GO:0004640">
    <property type="term" value="F:phosphoribosylanthranilate isomerase activity"/>
    <property type="evidence" value="ECO:0007669"/>
    <property type="project" value="TreeGrafter"/>
</dbReference>
<dbReference type="GO" id="GO:0000162">
    <property type="term" value="P:L-tryptophan biosynthetic process"/>
    <property type="evidence" value="ECO:0007669"/>
    <property type="project" value="UniProtKB-UniRule"/>
</dbReference>
<dbReference type="CDD" id="cd00331">
    <property type="entry name" value="IGPS"/>
    <property type="match status" value="1"/>
</dbReference>
<dbReference type="FunFam" id="3.20.20.70:FF:000024">
    <property type="entry name" value="Indole-3-glycerol phosphate synthase"/>
    <property type="match status" value="1"/>
</dbReference>
<dbReference type="Gene3D" id="3.20.20.70">
    <property type="entry name" value="Aldolase class I"/>
    <property type="match status" value="1"/>
</dbReference>
<dbReference type="HAMAP" id="MF_00134_B">
    <property type="entry name" value="IGPS_B"/>
    <property type="match status" value="1"/>
</dbReference>
<dbReference type="InterPro" id="IPR013785">
    <property type="entry name" value="Aldolase_TIM"/>
</dbReference>
<dbReference type="InterPro" id="IPR045186">
    <property type="entry name" value="Indole-3-glycerol_P_synth"/>
</dbReference>
<dbReference type="InterPro" id="IPR013798">
    <property type="entry name" value="Indole-3-glycerol_P_synth_dom"/>
</dbReference>
<dbReference type="InterPro" id="IPR001468">
    <property type="entry name" value="Indole-3-GlycerolPSynthase_CS"/>
</dbReference>
<dbReference type="InterPro" id="IPR011060">
    <property type="entry name" value="RibuloseP-bd_barrel"/>
</dbReference>
<dbReference type="NCBIfam" id="NF001371">
    <property type="entry name" value="PRK00278.1-3"/>
    <property type="match status" value="1"/>
</dbReference>
<dbReference type="PANTHER" id="PTHR22854:SF2">
    <property type="entry name" value="INDOLE-3-GLYCEROL-PHOSPHATE SYNTHASE"/>
    <property type="match status" value="1"/>
</dbReference>
<dbReference type="PANTHER" id="PTHR22854">
    <property type="entry name" value="TRYPTOPHAN BIOSYNTHESIS PROTEIN"/>
    <property type="match status" value="1"/>
</dbReference>
<dbReference type="Pfam" id="PF00218">
    <property type="entry name" value="IGPS"/>
    <property type="match status" value="1"/>
</dbReference>
<dbReference type="SUPFAM" id="SSF51366">
    <property type="entry name" value="Ribulose-phoshate binding barrel"/>
    <property type="match status" value="1"/>
</dbReference>
<dbReference type="PROSITE" id="PS00614">
    <property type="entry name" value="IGPS"/>
    <property type="match status" value="1"/>
</dbReference>
<evidence type="ECO:0000255" key="1">
    <source>
        <dbReference type="HAMAP-Rule" id="MF_00134"/>
    </source>
</evidence>
<sequence>MNIKEGKFLETILAEKKQEIAQMPDENSKPIRQTYRLYDYLKKHSDQLQVIAEVKKASPSLGDINLEVDIIAQAKNYEQAGAAMISVLTDPVFFKGNIEYLREISKNVQIPTLNKDFIIDKKQINRALNAGATVILLIVACFENDFEKLEELYNYAISLGLEVLVETHNKAELDRAHQLAAKIIGVNNRNLKTFEVSLQNSTDLVPYFKEENVYISESGIFGKKEAQKVAENFNGILVGTALMQANNLTKSLTDLKIKRKNDEH</sequence>
<accession>A2RK21</accession>
<comment type="catalytic activity">
    <reaction evidence="1">
        <text>1-(2-carboxyphenylamino)-1-deoxy-D-ribulose 5-phosphate + H(+) = (1S,2R)-1-C-(indol-3-yl)glycerol 3-phosphate + CO2 + H2O</text>
        <dbReference type="Rhea" id="RHEA:23476"/>
        <dbReference type="ChEBI" id="CHEBI:15377"/>
        <dbReference type="ChEBI" id="CHEBI:15378"/>
        <dbReference type="ChEBI" id="CHEBI:16526"/>
        <dbReference type="ChEBI" id="CHEBI:58613"/>
        <dbReference type="ChEBI" id="CHEBI:58866"/>
        <dbReference type="EC" id="4.1.1.48"/>
    </reaction>
</comment>
<comment type="pathway">
    <text evidence="1">Amino-acid biosynthesis; L-tryptophan biosynthesis; L-tryptophan from chorismate: step 4/5.</text>
</comment>
<comment type="similarity">
    <text evidence="1">Belongs to the TrpC family.</text>
</comment>
<proteinExistence type="inferred from homology"/>